<protein>
    <recommendedName>
        <fullName evidence="1">NADH-quinone oxidoreductase subunit B</fullName>
        <ecNumber evidence="1">7.1.1.-</ecNumber>
    </recommendedName>
    <alternativeName>
        <fullName evidence="1">NADH dehydrogenase I subunit B</fullName>
    </alternativeName>
    <alternativeName>
        <fullName evidence="1">NDH-1 subunit B</fullName>
    </alternativeName>
</protein>
<evidence type="ECO:0000255" key="1">
    <source>
        <dbReference type="HAMAP-Rule" id="MF_01356"/>
    </source>
</evidence>
<evidence type="ECO:0000256" key="2">
    <source>
        <dbReference type="SAM" id="MobiDB-lite"/>
    </source>
</evidence>
<comment type="function">
    <text evidence="1">NDH-1 shuttles electrons from NADH, via FMN and iron-sulfur (Fe-S) centers, to quinones in the respiratory chain. The immediate electron acceptor for the enzyme in this species is believed to be ubiquinone. Couples the redox reaction to proton translocation (for every two electrons transferred, four hydrogen ions are translocated across the cytoplasmic membrane), and thus conserves the redox energy in a proton gradient.</text>
</comment>
<comment type="catalytic activity">
    <reaction evidence="1">
        <text>a quinone + NADH + 5 H(+)(in) = a quinol + NAD(+) + 4 H(+)(out)</text>
        <dbReference type="Rhea" id="RHEA:57888"/>
        <dbReference type="ChEBI" id="CHEBI:15378"/>
        <dbReference type="ChEBI" id="CHEBI:24646"/>
        <dbReference type="ChEBI" id="CHEBI:57540"/>
        <dbReference type="ChEBI" id="CHEBI:57945"/>
        <dbReference type="ChEBI" id="CHEBI:132124"/>
    </reaction>
</comment>
<comment type="cofactor">
    <cofactor evidence="1">
        <name>[4Fe-4S] cluster</name>
        <dbReference type="ChEBI" id="CHEBI:49883"/>
    </cofactor>
    <text evidence="1">Binds 1 [4Fe-4S] cluster.</text>
</comment>
<comment type="subunit">
    <text evidence="1">NDH-1 is composed of 14 different subunits. Subunits NuoB, C, D, E, F, and G constitute the peripheral sector of the complex.</text>
</comment>
<comment type="subcellular location">
    <subcellularLocation>
        <location evidence="1">Cell inner membrane</location>
        <topology evidence="1">Peripheral membrane protein</topology>
        <orientation evidence="1">Cytoplasmic side</orientation>
    </subcellularLocation>
</comment>
<comment type="similarity">
    <text evidence="1">Belongs to the complex I 20 kDa subunit family.</text>
</comment>
<feature type="chain" id="PRO_0000376401" description="NADH-quinone oxidoreductase subunit B">
    <location>
        <begin position="1"/>
        <end position="194"/>
    </location>
</feature>
<feature type="region of interest" description="Disordered" evidence="2">
    <location>
        <begin position="1"/>
        <end position="26"/>
    </location>
</feature>
<feature type="binding site" evidence="1">
    <location>
        <position position="73"/>
    </location>
    <ligand>
        <name>[4Fe-4S] cluster</name>
        <dbReference type="ChEBI" id="CHEBI:49883"/>
    </ligand>
</feature>
<feature type="binding site" evidence="1">
    <location>
        <position position="74"/>
    </location>
    <ligand>
        <name>[4Fe-4S] cluster</name>
        <dbReference type="ChEBI" id="CHEBI:49883"/>
    </ligand>
</feature>
<feature type="binding site" evidence="1">
    <location>
        <position position="138"/>
    </location>
    <ligand>
        <name>[4Fe-4S] cluster</name>
        <dbReference type="ChEBI" id="CHEBI:49883"/>
    </ligand>
</feature>
<feature type="binding site" evidence="1">
    <location>
        <position position="168"/>
    </location>
    <ligand>
        <name>[4Fe-4S] cluster</name>
        <dbReference type="ChEBI" id="CHEBI:49883"/>
    </ligand>
</feature>
<reference key="1">
    <citation type="submission" date="2007-07" db="EMBL/GenBank/DDBJ databases">
        <title>Complete sequence of chromosome of Xanthobacter autotrophicus Py2.</title>
        <authorList>
            <consortium name="US DOE Joint Genome Institute"/>
            <person name="Copeland A."/>
            <person name="Lucas S."/>
            <person name="Lapidus A."/>
            <person name="Barry K."/>
            <person name="Glavina del Rio T."/>
            <person name="Hammon N."/>
            <person name="Israni S."/>
            <person name="Dalin E."/>
            <person name="Tice H."/>
            <person name="Pitluck S."/>
            <person name="Sims D."/>
            <person name="Brettin T."/>
            <person name="Bruce D."/>
            <person name="Detter J.C."/>
            <person name="Han C."/>
            <person name="Tapia R."/>
            <person name="Brainard J."/>
            <person name="Schmutz J."/>
            <person name="Larimer F."/>
            <person name="Land M."/>
            <person name="Hauser L."/>
            <person name="Kyrpides N."/>
            <person name="Kim E."/>
            <person name="Ensigns S.A."/>
            <person name="Richardson P."/>
        </authorList>
    </citation>
    <scope>NUCLEOTIDE SEQUENCE [LARGE SCALE GENOMIC DNA]</scope>
    <source>
        <strain>ATCC BAA-1158 / Py2</strain>
    </source>
</reference>
<keyword id="KW-0004">4Fe-4S</keyword>
<keyword id="KW-0997">Cell inner membrane</keyword>
<keyword id="KW-1003">Cell membrane</keyword>
<keyword id="KW-0408">Iron</keyword>
<keyword id="KW-0411">Iron-sulfur</keyword>
<keyword id="KW-0472">Membrane</keyword>
<keyword id="KW-0479">Metal-binding</keyword>
<keyword id="KW-0520">NAD</keyword>
<keyword id="KW-0874">Quinone</keyword>
<keyword id="KW-1185">Reference proteome</keyword>
<keyword id="KW-1278">Translocase</keyword>
<keyword id="KW-0813">Transport</keyword>
<keyword id="KW-0830">Ubiquinone</keyword>
<sequence length="194" mass="21232">MGLTPSATKPEIAQAPQGIVDPSTGRPVGADDPFFKEINSELADKGFILTTADDLITWARTGSLMWMTFGLACCAVEMMQVSMPRYDVERFGFAPRASPRQSDVMIVAGTLTNKMAPALRKVYDQMPEPRYVISMGSCANGGGYYHFSYAVVRGCDRIVPVDIYVPGCPPTAEALLYGVLLLQKKIRRIGTIER</sequence>
<proteinExistence type="inferred from homology"/>
<dbReference type="EC" id="7.1.1.-" evidence="1"/>
<dbReference type="EMBL" id="CP000781">
    <property type="protein sequence ID" value="ABS69852.1"/>
    <property type="molecule type" value="Genomic_DNA"/>
</dbReference>
<dbReference type="SMR" id="A7IPA6"/>
<dbReference type="STRING" id="78245.Xaut_4632"/>
<dbReference type="KEGG" id="xau:Xaut_4632"/>
<dbReference type="eggNOG" id="COG0377">
    <property type="taxonomic scope" value="Bacteria"/>
</dbReference>
<dbReference type="HOGENOM" id="CLU_055737_7_3_5"/>
<dbReference type="OrthoDB" id="9786737at2"/>
<dbReference type="PhylomeDB" id="A7IPA6"/>
<dbReference type="Proteomes" id="UP000002417">
    <property type="component" value="Chromosome"/>
</dbReference>
<dbReference type="GO" id="GO:0005886">
    <property type="term" value="C:plasma membrane"/>
    <property type="evidence" value="ECO:0007669"/>
    <property type="project" value="UniProtKB-SubCell"/>
</dbReference>
<dbReference type="GO" id="GO:0045271">
    <property type="term" value="C:respiratory chain complex I"/>
    <property type="evidence" value="ECO:0007669"/>
    <property type="project" value="TreeGrafter"/>
</dbReference>
<dbReference type="GO" id="GO:0051539">
    <property type="term" value="F:4 iron, 4 sulfur cluster binding"/>
    <property type="evidence" value="ECO:0007669"/>
    <property type="project" value="UniProtKB-KW"/>
</dbReference>
<dbReference type="GO" id="GO:0005506">
    <property type="term" value="F:iron ion binding"/>
    <property type="evidence" value="ECO:0007669"/>
    <property type="project" value="UniProtKB-UniRule"/>
</dbReference>
<dbReference type="GO" id="GO:0008137">
    <property type="term" value="F:NADH dehydrogenase (ubiquinone) activity"/>
    <property type="evidence" value="ECO:0007669"/>
    <property type="project" value="InterPro"/>
</dbReference>
<dbReference type="GO" id="GO:0050136">
    <property type="term" value="F:NADH:ubiquinone reductase (non-electrogenic) activity"/>
    <property type="evidence" value="ECO:0007669"/>
    <property type="project" value="UniProtKB-UniRule"/>
</dbReference>
<dbReference type="GO" id="GO:0048038">
    <property type="term" value="F:quinone binding"/>
    <property type="evidence" value="ECO:0007669"/>
    <property type="project" value="UniProtKB-KW"/>
</dbReference>
<dbReference type="GO" id="GO:0009060">
    <property type="term" value="P:aerobic respiration"/>
    <property type="evidence" value="ECO:0007669"/>
    <property type="project" value="TreeGrafter"/>
</dbReference>
<dbReference type="GO" id="GO:0015990">
    <property type="term" value="P:electron transport coupled proton transport"/>
    <property type="evidence" value="ECO:0007669"/>
    <property type="project" value="TreeGrafter"/>
</dbReference>
<dbReference type="FunFam" id="3.40.50.12280:FF:000001">
    <property type="entry name" value="NADH-quinone oxidoreductase subunit B 2"/>
    <property type="match status" value="1"/>
</dbReference>
<dbReference type="Gene3D" id="3.40.50.12280">
    <property type="match status" value="1"/>
</dbReference>
<dbReference type="HAMAP" id="MF_01356">
    <property type="entry name" value="NDH1_NuoB"/>
    <property type="match status" value="1"/>
</dbReference>
<dbReference type="InterPro" id="IPR006137">
    <property type="entry name" value="NADH_UbQ_OxRdtase-like_20kDa"/>
</dbReference>
<dbReference type="InterPro" id="IPR006138">
    <property type="entry name" value="NADH_UQ_OxRdtase_20Kd_su"/>
</dbReference>
<dbReference type="NCBIfam" id="TIGR01957">
    <property type="entry name" value="nuoB_fam"/>
    <property type="match status" value="1"/>
</dbReference>
<dbReference type="NCBIfam" id="NF005012">
    <property type="entry name" value="PRK06411.1"/>
    <property type="match status" value="1"/>
</dbReference>
<dbReference type="PANTHER" id="PTHR11995">
    <property type="entry name" value="NADH DEHYDROGENASE"/>
    <property type="match status" value="1"/>
</dbReference>
<dbReference type="PANTHER" id="PTHR11995:SF14">
    <property type="entry name" value="NADH DEHYDROGENASE [UBIQUINONE] IRON-SULFUR PROTEIN 7, MITOCHONDRIAL"/>
    <property type="match status" value="1"/>
</dbReference>
<dbReference type="Pfam" id="PF01058">
    <property type="entry name" value="Oxidored_q6"/>
    <property type="match status" value="1"/>
</dbReference>
<dbReference type="SUPFAM" id="SSF56770">
    <property type="entry name" value="HydA/Nqo6-like"/>
    <property type="match status" value="1"/>
</dbReference>
<dbReference type="PROSITE" id="PS01150">
    <property type="entry name" value="COMPLEX1_20K"/>
    <property type="match status" value="1"/>
</dbReference>
<accession>A7IPA6</accession>
<name>NUOB_XANP2</name>
<gene>
    <name evidence="1" type="primary">nuoB</name>
    <name type="ordered locus">Xaut_4632</name>
</gene>
<organism>
    <name type="scientific">Xanthobacter autotrophicus (strain ATCC BAA-1158 / Py2)</name>
    <dbReference type="NCBI Taxonomy" id="78245"/>
    <lineage>
        <taxon>Bacteria</taxon>
        <taxon>Pseudomonadati</taxon>
        <taxon>Pseudomonadota</taxon>
        <taxon>Alphaproteobacteria</taxon>
        <taxon>Hyphomicrobiales</taxon>
        <taxon>Xanthobacteraceae</taxon>
        <taxon>Xanthobacter</taxon>
    </lineage>
</organism>